<proteinExistence type="inferred from homology"/>
<organism>
    <name type="scientific">Bacillus thuringiensis (strain Al Hakam)</name>
    <dbReference type="NCBI Taxonomy" id="412694"/>
    <lineage>
        <taxon>Bacteria</taxon>
        <taxon>Bacillati</taxon>
        <taxon>Bacillota</taxon>
        <taxon>Bacilli</taxon>
        <taxon>Bacillales</taxon>
        <taxon>Bacillaceae</taxon>
        <taxon>Bacillus</taxon>
        <taxon>Bacillus cereus group</taxon>
    </lineage>
</organism>
<dbReference type="EMBL" id="CP000485">
    <property type="protein sequence ID" value="ABK84157.1"/>
    <property type="status" value="ALT_INIT"/>
    <property type="molecule type" value="Genomic_DNA"/>
</dbReference>
<dbReference type="RefSeq" id="WP_000164606.1">
    <property type="nucleotide sequence ID" value="NC_008600.1"/>
</dbReference>
<dbReference type="SMR" id="A0RAB4"/>
<dbReference type="KEGG" id="btl:BALH_0781"/>
<dbReference type="HOGENOM" id="CLU_140243_3_0_9"/>
<dbReference type="Gene3D" id="1.20.1500.10">
    <property type="entry name" value="YheA/YmcA-like"/>
    <property type="match status" value="1"/>
</dbReference>
<dbReference type="HAMAP" id="MF_01526">
    <property type="entry name" value="UPF0342"/>
    <property type="match status" value="1"/>
</dbReference>
<dbReference type="InterPro" id="IPR010368">
    <property type="entry name" value="Com_YlbF"/>
</dbReference>
<dbReference type="InterPro" id="IPR023378">
    <property type="entry name" value="YheA/YmcA-like_dom_sf"/>
</dbReference>
<dbReference type="NCBIfam" id="NF010211">
    <property type="entry name" value="PRK13676.1-4"/>
    <property type="match status" value="1"/>
</dbReference>
<dbReference type="Pfam" id="PF06133">
    <property type="entry name" value="Com_YlbF"/>
    <property type="match status" value="1"/>
</dbReference>
<dbReference type="SUPFAM" id="SSF158622">
    <property type="entry name" value="YheA/YmcA-like"/>
    <property type="match status" value="1"/>
</dbReference>
<accession>A0RAB4</accession>
<comment type="similarity">
    <text evidence="1">Belongs to the UPF0342 family.</text>
</comment>
<comment type="sequence caution" evidence="2">
    <conflict type="erroneous initiation">
        <sequence resource="EMBL-CDS" id="ABK84157"/>
    </conflict>
</comment>
<name>Y781_BACAH</name>
<feature type="chain" id="PRO_0000292729" description="UPF0342 protein BALH_0781">
    <location>
        <begin position="1"/>
        <end position="118"/>
    </location>
</feature>
<protein>
    <recommendedName>
        <fullName evidence="1">UPF0342 protein BALH_0781</fullName>
    </recommendedName>
</protein>
<reference key="1">
    <citation type="journal article" date="2007" name="J. Bacteriol.">
        <title>The complete genome sequence of Bacillus thuringiensis Al Hakam.</title>
        <authorList>
            <person name="Challacombe J.F."/>
            <person name="Altherr M.R."/>
            <person name="Xie G."/>
            <person name="Bhotika S.S."/>
            <person name="Brown N."/>
            <person name="Bruce D."/>
            <person name="Campbell C.S."/>
            <person name="Campbell M.L."/>
            <person name="Chen J."/>
            <person name="Chertkov O."/>
            <person name="Cleland C."/>
            <person name="Dimitrijevic M."/>
            <person name="Doggett N.A."/>
            <person name="Fawcett J.J."/>
            <person name="Glavina T."/>
            <person name="Goodwin L.A."/>
            <person name="Green L.D."/>
            <person name="Han C.S."/>
            <person name="Hill K.K."/>
            <person name="Hitchcock P."/>
            <person name="Jackson P.J."/>
            <person name="Keim P."/>
            <person name="Kewalramani A.R."/>
            <person name="Longmire J."/>
            <person name="Lucas S."/>
            <person name="Malfatti S."/>
            <person name="Martinez D."/>
            <person name="McMurry K."/>
            <person name="Meincke L.J."/>
            <person name="Misra M."/>
            <person name="Moseman B.L."/>
            <person name="Mundt M."/>
            <person name="Munk A.C."/>
            <person name="Okinaka R.T."/>
            <person name="Parson-Quintana B."/>
            <person name="Reilly L.P."/>
            <person name="Richardson P."/>
            <person name="Robinson D.L."/>
            <person name="Saunders E."/>
            <person name="Tapia R."/>
            <person name="Tesmer J.G."/>
            <person name="Thayer N."/>
            <person name="Thompson L.S."/>
            <person name="Tice H."/>
            <person name="Ticknor L.O."/>
            <person name="Wills P.L."/>
            <person name="Gilna P."/>
            <person name="Brettin T.S."/>
        </authorList>
    </citation>
    <scope>NUCLEOTIDE SEQUENCE [LARGE SCALE GENOMIC DNA]</scope>
    <source>
        <strain>Al Hakam</strain>
    </source>
</reference>
<gene>
    <name type="ordered locus">BALH_0781</name>
</gene>
<evidence type="ECO:0000255" key="1">
    <source>
        <dbReference type="HAMAP-Rule" id="MF_01526"/>
    </source>
</evidence>
<evidence type="ECO:0000305" key="2"/>
<sequence>MTKNIHDVAYELQKAIAENDDFKTLKESYAAVQADAASKNLFDEFRTMQLSLQQKMMQGQEITEEDNQQAQEVVVRIQQDAKITKLMETEQRLNVVIGDVNKIIMKPLEELYSAQQQA</sequence>